<sequence>MAFLKKSLFLVLFLGLVSLSICEEEKRETEEEEHDQEEDDKSEEKRFLSMIPHIVSGVAALAKHLG</sequence>
<dbReference type="EMBL" id="AM903080">
    <property type="protein sequence ID" value="CAP17493.1"/>
    <property type="molecule type" value="mRNA"/>
</dbReference>
<dbReference type="GO" id="GO:0005576">
    <property type="term" value="C:extracellular region"/>
    <property type="evidence" value="ECO:0007669"/>
    <property type="project" value="UniProtKB-SubCell"/>
</dbReference>
<dbReference type="GO" id="GO:0016020">
    <property type="term" value="C:membrane"/>
    <property type="evidence" value="ECO:0007669"/>
    <property type="project" value="UniProtKB-KW"/>
</dbReference>
<dbReference type="GO" id="GO:0044218">
    <property type="term" value="C:other organism cell membrane"/>
    <property type="evidence" value="ECO:0007669"/>
    <property type="project" value="UniProtKB-KW"/>
</dbReference>
<dbReference type="GO" id="GO:0042742">
    <property type="term" value="P:defense response to bacterium"/>
    <property type="evidence" value="ECO:0007669"/>
    <property type="project" value="UniProtKB-KW"/>
</dbReference>
<dbReference type="GO" id="GO:0050832">
    <property type="term" value="P:defense response to fungus"/>
    <property type="evidence" value="ECO:0007669"/>
    <property type="project" value="UniProtKB-KW"/>
</dbReference>
<dbReference type="GO" id="GO:0045087">
    <property type="term" value="P:innate immune response"/>
    <property type="evidence" value="ECO:0007669"/>
    <property type="project" value="UniProtKB-KW"/>
</dbReference>
<dbReference type="GO" id="GO:0031640">
    <property type="term" value="P:killing of cells of another organism"/>
    <property type="evidence" value="ECO:0007669"/>
    <property type="project" value="UniProtKB-KW"/>
</dbReference>
<dbReference type="InterPro" id="IPR004275">
    <property type="entry name" value="Frog_antimicrobial_propeptide"/>
</dbReference>
<dbReference type="InterPro" id="IPR016322">
    <property type="entry name" value="FSAP"/>
</dbReference>
<dbReference type="Pfam" id="PF03032">
    <property type="entry name" value="FSAP_sig_propep"/>
    <property type="match status" value="1"/>
</dbReference>
<dbReference type="PIRSF" id="PIRSF001822">
    <property type="entry name" value="Dermaseptin_precursor"/>
    <property type="match status" value="1"/>
</dbReference>
<accession>F7UI87</accession>
<proteinExistence type="evidence at protein level"/>
<feature type="signal peptide" evidence="1">
    <location>
        <begin position="1"/>
        <end position="22"/>
    </location>
</feature>
<feature type="propeptide" id="PRO_0000449582" evidence="6">
    <location>
        <begin position="23"/>
        <end position="46"/>
    </location>
</feature>
<feature type="peptide" id="PRO_5003369244" description="Phylloseptin-S4" evidence="3">
    <location>
        <begin position="47"/>
        <end position="65"/>
    </location>
</feature>
<feature type="region of interest" description="Disordered" evidence="2">
    <location>
        <begin position="25"/>
        <end position="44"/>
    </location>
</feature>
<feature type="compositionally biased region" description="Acidic residues" evidence="2">
    <location>
        <begin position="30"/>
        <end position="41"/>
    </location>
</feature>
<feature type="modified residue" description="Leucine amide" evidence="3">
    <location>
        <position position="65"/>
    </location>
</feature>
<keyword id="KW-0027">Amidation</keyword>
<keyword id="KW-0878">Amphibian defense peptide</keyword>
<keyword id="KW-0044">Antibiotic</keyword>
<keyword id="KW-0929">Antimicrobial</keyword>
<keyword id="KW-0165">Cleavage on pair of basic residues</keyword>
<keyword id="KW-0204">Cytolysis</keyword>
<keyword id="KW-0903">Direct protein sequencing</keyword>
<keyword id="KW-0295">Fungicide</keyword>
<keyword id="KW-0354">Hemolysis</keyword>
<keyword id="KW-0391">Immunity</keyword>
<keyword id="KW-0399">Innate immunity</keyword>
<keyword id="KW-0472">Membrane</keyword>
<keyword id="KW-0964">Secreted</keyword>
<keyword id="KW-0732">Signal</keyword>
<keyword id="KW-1052">Target cell membrane</keyword>
<keyword id="KW-1053">Target membrane</keyword>
<name>PLS4_PHYSA</name>
<comment type="function">
    <text evidence="3">Antimicrobial peptide with high activity against Gram-positive bacteria, moderate activity against Gram-negative bacteria, and moderate activity against fungi (PubMed:23967105). Acts by causing bacterial membrane disruption inducing leakage of the intracellular content followed by cell death (PubMed:23967105). It adopts an alpha-helical amphipathic structure in membrane environments (PubMed:23967105). Also shows highly potent antiparasitic activity against Leishmania species (PubMed:23967105). Shows moderate hemolytic activity on human erythrocytes (LC(50)=33 uM) (PubMed:23967105). Is also active on human monocytes (IC(50)=23 uM) (PubMed:23967105).</text>
</comment>
<comment type="subcellular location">
    <subcellularLocation>
        <location evidence="3">Secreted</location>
    </subcellularLocation>
    <subcellularLocation>
        <location evidence="3">Target cell membrane</location>
    </subcellularLocation>
    <text evidence="6">Forms a helical membrane channel in the target.</text>
</comment>
<comment type="tissue specificity">
    <text evidence="6">Expressed by the skin glands.</text>
</comment>
<comment type="mass spectrometry"/>
<comment type="similarity">
    <text evidence="5">Belongs to the frog skin active peptide (FSAP) family. Phylloseptin subfamily.</text>
</comment>
<protein>
    <recommendedName>
        <fullName evidence="4">Phylloseptin-S4</fullName>
        <shortName evidence="4">PLS-S4</shortName>
    </recommendedName>
</protein>
<evidence type="ECO:0000255" key="1"/>
<evidence type="ECO:0000256" key="2">
    <source>
        <dbReference type="SAM" id="MobiDB-lite"/>
    </source>
</evidence>
<evidence type="ECO:0000269" key="3">
    <source>
    </source>
</evidence>
<evidence type="ECO:0000303" key="4">
    <source>
    </source>
</evidence>
<evidence type="ECO:0000305" key="5"/>
<evidence type="ECO:0000305" key="6">
    <source>
    </source>
</evidence>
<reference key="1">
    <citation type="journal article" date="2013" name="PLoS ONE">
        <title>Structure, antimicrobial activities and mode of interaction with membranes of novel [corrected] phylloseptins from the painted-belly leaf frog, Phyllomedusa sauvagii.</title>
        <authorList>
            <person name="Raja Z."/>
            <person name="Andre S."/>
            <person name="Piesse C."/>
            <person name="Sereno D."/>
            <person name="Nicolas P."/>
            <person name="Foulon T."/>
            <person name="Oury B."/>
            <person name="Ladram A."/>
        </authorList>
    </citation>
    <scope>NUCLEOTIDE SEQUENCE [MRNA]</scope>
    <scope>PROTEIN SEQUENCE OF 47-65</scope>
    <scope>AMIDATION AT LEU-65</scope>
    <scope>SUBCELLULAR LOCATION</scope>
    <scope>MASS SPECTROMETRY</scope>
    <source>
        <tissue>Skin secretion</tissue>
    </source>
</reference>
<organism>
    <name type="scientific">Phyllomedusa sauvagei</name>
    <name type="common">Sauvage's leaf frog</name>
    <dbReference type="NCBI Taxonomy" id="8395"/>
    <lineage>
        <taxon>Eukaryota</taxon>
        <taxon>Metazoa</taxon>
        <taxon>Chordata</taxon>
        <taxon>Craniata</taxon>
        <taxon>Vertebrata</taxon>
        <taxon>Euteleostomi</taxon>
        <taxon>Amphibia</taxon>
        <taxon>Batrachia</taxon>
        <taxon>Anura</taxon>
        <taxon>Neobatrachia</taxon>
        <taxon>Hyloidea</taxon>
        <taxon>Hylidae</taxon>
        <taxon>Phyllomedusinae</taxon>
        <taxon>Phyllomedusa</taxon>
    </lineage>
</organism>